<keyword id="KW-0195">Cyclin</keyword>
<keyword id="KW-1185">Reference proteome</keyword>
<proteinExistence type="evidence at transcript level"/>
<accession>Q9Z2V9</accession>
<accession>G3X985</accession>
<name>CCNI_MOUSE</name>
<comment type="similarity">
    <text evidence="2">Belongs to the cyclin family.</text>
</comment>
<sequence length="377" mass="42197">MKFPGPLENQRLSSLLERAISREAQMWKVNVPKIPTNQNVSPSQRDEVIQWLAKLKYQFNLYPETFALASSLLDRFLATVKAHPKYLNCIAISCFFLAAKTVEEDEKIPVLKVLARDSFCGCSSSEILRMERIILDKLNWDLHTATPLDFLHIFHAIAVSARPQLLFSLPKLSPSQHLAVLTKQLLHCMACNQLLQFKGSMLALAMVSLEMEKLIPDWLPLTIELLQKAQMDSSQLIHCRELVAYHLSALQSALPLNSVYVYRPLKHTLVTCDKGAFKLHPSSVSGPDFSKDNSKPEVPVRGPAAFHLHLPAASGCKQTSAKRKVEEMEVDDFYDGIKRLYNEDNGPENVGSVCGTDLSRQEGHASPCPPLQPVSVM</sequence>
<evidence type="ECO:0000256" key="1">
    <source>
        <dbReference type="SAM" id="MobiDB-lite"/>
    </source>
</evidence>
<evidence type="ECO:0000305" key="2"/>
<reference key="1">
    <citation type="journal article" date="1998" name="Cytogenet. Cell Genet.">
        <title>Assignment of the cyclin I gene (Ccni) to mouse chromosome 5E3.3-F1. 3 by in situ hybridization.</title>
        <authorList>
            <person name="Jensen M.R."/>
            <person name="Audolfsson T."/>
            <person name="Keck C.L."/>
            <person name="Zimonjic D.B."/>
            <person name="Thorgeirsson S.S."/>
        </authorList>
    </citation>
    <scope>NUCLEOTIDE SEQUENCE</scope>
</reference>
<reference key="2">
    <citation type="journal article" date="2000" name="Gene">
        <title>In vivo expression and genomic organization of the mouse cyclin I gene (Ccni).</title>
        <authorList>
            <person name="Jensen M.R."/>
            <person name="Audolfsson T."/>
            <person name="Factor V.M."/>
            <person name="Thorgeirsson S.S."/>
        </authorList>
    </citation>
    <scope>NUCLEOTIDE SEQUENCE [GENOMIC DNA / MRNA]</scope>
</reference>
<reference key="3">
    <citation type="journal article" date="2009" name="PLoS Biol.">
        <title>Lineage-specific biology revealed by a finished genome assembly of the mouse.</title>
        <authorList>
            <person name="Church D.M."/>
            <person name="Goodstadt L."/>
            <person name="Hillier L.W."/>
            <person name="Zody M.C."/>
            <person name="Goldstein S."/>
            <person name="She X."/>
            <person name="Bult C.J."/>
            <person name="Agarwala R."/>
            <person name="Cherry J.L."/>
            <person name="DiCuccio M."/>
            <person name="Hlavina W."/>
            <person name="Kapustin Y."/>
            <person name="Meric P."/>
            <person name="Maglott D."/>
            <person name="Birtle Z."/>
            <person name="Marques A.C."/>
            <person name="Graves T."/>
            <person name="Zhou S."/>
            <person name="Teague B."/>
            <person name="Potamousis K."/>
            <person name="Churas C."/>
            <person name="Place M."/>
            <person name="Herschleb J."/>
            <person name="Runnheim R."/>
            <person name="Forrest D."/>
            <person name="Amos-Landgraf J."/>
            <person name="Schwartz D.C."/>
            <person name="Cheng Z."/>
            <person name="Lindblad-Toh K."/>
            <person name="Eichler E.E."/>
            <person name="Ponting C.P."/>
        </authorList>
    </citation>
    <scope>NUCLEOTIDE SEQUENCE [LARGE SCALE GENOMIC DNA]</scope>
    <source>
        <strain>C57BL/6J</strain>
    </source>
</reference>
<reference key="4">
    <citation type="submission" date="2005-07" db="EMBL/GenBank/DDBJ databases">
        <authorList>
            <person name="Mural R.J."/>
            <person name="Adams M.D."/>
            <person name="Myers E.W."/>
            <person name="Smith H.O."/>
            <person name="Venter J.C."/>
        </authorList>
    </citation>
    <scope>NUCLEOTIDE SEQUENCE [LARGE SCALE GENOMIC DNA]</scope>
</reference>
<protein>
    <recommendedName>
        <fullName>Cyclin-I</fullName>
    </recommendedName>
</protein>
<gene>
    <name type="primary">Ccni</name>
</gene>
<feature type="chain" id="PRO_0000080477" description="Cyclin-I">
    <location>
        <begin position="1"/>
        <end position="377"/>
    </location>
</feature>
<feature type="region of interest" description="Disordered" evidence="1">
    <location>
        <begin position="356"/>
        <end position="377"/>
    </location>
</feature>
<feature type="compositionally biased region" description="Pro residues" evidence="1">
    <location>
        <begin position="367"/>
        <end position="377"/>
    </location>
</feature>
<feature type="sequence conflict" description="In Ref. 2; AAD01253/AAF43391." evidence="2" ref="2">
    <original>A</original>
    <variation>T</variation>
    <location>
        <position position="161"/>
    </location>
</feature>
<dbReference type="EMBL" id="AC134827">
    <property type="status" value="NOT_ANNOTATED_CDS"/>
    <property type="molecule type" value="Genomic_DNA"/>
</dbReference>
<dbReference type="EMBL" id="CH466617">
    <property type="protein sequence ID" value="EDL05230.1"/>
    <property type="molecule type" value="Genomic_DNA"/>
</dbReference>
<dbReference type="EMBL" id="CH466617">
    <property type="protein sequence ID" value="EDL05231.1"/>
    <property type="molecule type" value="Genomic_DNA"/>
</dbReference>
<dbReference type="EMBL" id="AF005886">
    <property type="protein sequence ID" value="AAD01253.2"/>
    <property type="molecule type" value="mRNA"/>
</dbReference>
<dbReference type="EMBL" id="AF228740">
    <property type="protein sequence ID" value="AAF43391.1"/>
    <property type="molecule type" value="Genomic_DNA"/>
</dbReference>
<dbReference type="EMBL" id="AF228739">
    <property type="protein sequence ID" value="AAF43391.1"/>
    <property type="status" value="JOINED"/>
    <property type="molecule type" value="Genomic_DNA"/>
</dbReference>
<dbReference type="CCDS" id="CCDS19436.1"/>
<dbReference type="RefSeq" id="NP_001407652.1">
    <property type="nucleotide sequence ID" value="NM_001420723.1"/>
</dbReference>
<dbReference type="RefSeq" id="NP_059063.2">
    <property type="nucleotide sequence ID" value="NM_017367.4"/>
</dbReference>
<dbReference type="RefSeq" id="XP_006534799.1">
    <property type="nucleotide sequence ID" value="XM_006534736.3"/>
</dbReference>
<dbReference type="SMR" id="Q9Z2V9"/>
<dbReference type="FunCoup" id="Q9Z2V9">
    <property type="interactions" value="2861"/>
</dbReference>
<dbReference type="STRING" id="10090.ENSMUSP00000050189"/>
<dbReference type="iPTMnet" id="Q9Z2V9"/>
<dbReference type="PhosphoSitePlus" id="Q9Z2V9"/>
<dbReference type="PaxDb" id="10090-ENSMUSP00000050189"/>
<dbReference type="ProteomicsDB" id="265617"/>
<dbReference type="Antibodypedia" id="4127">
    <property type="antibodies" value="169 antibodies from 27 providers"/>
</dbReference>
<dbReference type="DNASU" id="12453"/>
<dbReference type="Ensembl" id="ENSMUST00000058550.15">
    <property type="protein sequence ID" value="ENSMUSP00000050189.9"/>
    <property type="gene ID" value="ENSMUSG00000063015.13"/>
</dbReference>
<dbReference type="GeneID" id="12453"/>
<dbReference type="KEGG" id="mmu:12453"/>
<dbReference type="UCSC" id="uc008yed.2">
    <property type="organism name" value="mouse"/>
</dbReference>
<dbReference type="AGR" id="MGI:1341077"/>
<dbReference type="CTD" id="10983"/>
<dbReference type="MGI" id="MGI:1341077">
    <property type="gene designation" value="Ccni"/>
</dbReference>
<dbReference type="VEuPathDB" id="HostDB:ENSMUSG00000063015"/>
<dbReference type="eggNOG" id="KOG0653">
    <property type="taxonomic scope" value="Eukaryota"/>
</dbReference>
<dbReference type="GeneTree" id="ENSGT00940000154827"/>
<dbReference type="HOGENOM" id="CLU_062642_1_0_1"/>
<dbReference type="InParanoid" id="Q9Z2V9"/>
<dbReference type="OMA" id="TGCKHAS"/>
<dbReference type="OrthoDB" id="769138at2759"/>
<dbReference type="PhylomeDB" id="Q9Z2V9"/>
<dbReference type="TreeFam" id="TF101007"/>
<dbReference type="BioGRID-ORCS" id="12453">
    <property type="hits" value="5 hits in 77 CRISPR screens"/>
</dbReference>
<dbReference type="ChiTaRS" id="Ccni">
    <property type="organism name" value="mouse"/>
</dbReference>
<dbReference type="PRO" id="PR:Q9Z2V9"/>
<dbReference type="Proteomes" id="UP000000589">
    <property type="component" value="Chromosome 5"/>
</dbReference>
<dbReference type="RNAct" id="Q9Z2V9">
    <property type="molecule type" value="protein"/>
</dbReference>
<dbReference type="Bgee" id="ENSMUSG00000063015">
    <property type="expression patterns" value="Expressed in cortical plate and 68 other cell types or tissues"/>
</dbReference>
<dbReference type="ExpressionAtlas" id="Q9Z2V9">
    <property type="expression patterns" value="baseline and differential"/>
</dbReference>
<dbReference type="GO" id="GO:0016538">
    <property type="term" value="F:cyclin-dependent protein serine/threonine kinase regulator activity"/>
    <property type="evidence" value="ECO:0000250"/>
    <property type="project" value="MGI"/>
</dbReference>
<dbReference type="GO" id="GO:0051726">
    <property type="term" value="P:regulation of cell cycle"/>
    <property type="evidence" value="ECO:0000304"/>
    <property type="project" value="MGI"/>
</dbReference>
<dbReference type="CDD" id="cd20526">
    <property type="entry name" value="CYCLIN_CCNI-like"/>
    <property type="match status" value="1"/>
</dbReference>
<dbReference type="FunFam" id="1.10.472.10:FF:000006">
    <property type="entry name" value="Cyclin I"/>
    <property type="match status" value="1"/>
</dbReference>
<dbReference type="FunFam" id="1.10.472.10:FF:000052">
    <property type="entry name" value="cyclin-I isoform X1"/>
    <property type="match status" value="1"/>
</dbReference>
<dbReference type="Gene3D" id="1.10.472.10">
    <property type="entry name" value="Cyclin-like"/>
    <property type="match status" value="2"/>
</dbReference>
<dbReference type="InterPro" id="IPR039361">
    <property type="entry name" value="Cyclin"/>
</dbReference>
<dbReference type="InterPro" id="IPR013763">
    <property type="entry name" value="Cyclin-like_dom"/>
</dbReference>
<dbReference type="InterPro" id="IPR036915">
    <property type="entry name" value="Cyclin-like_sf"/>
</dbReference>
<dbReference type="InterPro" id="IPR006671">
    <property type="entry name" value="Cyclin_N"/>
</dbReference>
<dbReference type="PANTHER" id="PTHR10177">
    <property type="entry name" value="CYCLINS"/>
    <property type="match status" value="1"/>
</dbReference>
<dbReference type="Pfam" id="PF00134">
    <property type="entry name" value="Cyclin_N"/>
    <property type="match status" value="1"/>
</dbReference>
<dbReference type="SMART" id="SM00385">
    <property type="entry name" value="CYCLIN"/>
    <property type="match status" value="1"/>
</dbReference>
<dbReference type="SUPFAM" id="SSF47954">
    <property type="entry name" value="Cyclin-like"/>
    <property type="match status" value="1"/>
</dbReference>
<organism>
    <name type="scientific">Mus musculus</name>
    <name type="common">Mouse</name>
    <dbReference type="NCBI Taxonomy" id="10090"/>
    <lineage>
        <taxon>Eukaryota</taxon>
        <taxon>Metazoa</taxon>
        <taxon>Chordata</taxon>
        <taxon>Craniata</taxon>
        <taxon>Vertebrata</taxon>
        <taxon>Euteleostomi</taxon>
        <taxon>Mammalia</taxon>
        <taxon>Eutheria</taxon>
        <taxon>Euarchontoglires</taxon>
        <taxon>Glires</taxon>
        <taxon>Rodentia</taxon>
        <taxon>Myomorpha</taxon>
        <taxon>Muroidea</taxon>
        <taxon>Muridae</taxon>
        <taxon>Murinae</taxon>
        <taxon>Mus</taxon>
        <taxon>Mus</taxon>
    </lineage>
</organism>